<gene>
    <name evidence="1" type="primary">rph</name>
    <name type="ordered locus">LMHCC_1415</name>
</gene>
<reference key="1">
    <citation type="journal article" date="2011" name="J. Bacteriol.">
        <title>Genome sequence of lineage III Listeria monocytogenes strain HCC23.</title>
        <authorList>
            <person name="Steele C.L."/>
            <person name="Donaldson J.R."/>
            <person name="Paul D."/>
            <person name="Banes M.M."/>
            <person name="Arick T."/>
            <person name="Bridges S.M."/>
            <person name="Lawrence M.L."/>
        </authorList>
    </citation>
    <scope>NUCLEOTIDE SEQUENCE [LARGE SCALE GENOMIC DNA]</scope>
    <source>
        <strain>HCC23</strain>
    </source>
</reference>
<accession>B8DHZ4</accession>
<dbReference type="EC" id="2.7.7.56" evidence="1"/>
<dbReference type="EMBL" id="CP001175">
    <property type="protein sequence ID" value="ACK39760.1"/>
    <property type="molecule type" value="Genomic_DNA"/>
</dbReference>
<dbReference type="RefSeq" id="WP_003726032.1">
    <property type="nucleotide sequence ID" value="NC_011660.1"/>
</dbReference>
<dbReference type="SMR" id="B8DHZ4"/>
<dbReference type="KEGG" id="lmh:LMHCC_1415"/>
<dbReference type="HOGENOM" id="CLU_050858_0_0_9"/>
<dbReference type="GO" id="GO:0000175">
    <property type="term" value="F:3'-5'-RNA exonuclease activity"/>
    <property type="evidence" value="ECO:0007669"/>
    <property type="project" value="UniProtKB-UniRule"/>
</dbReference>
<dbReference type="GO" id="GO:0000049">
    <property type="term" value="F:tRNA binding"/>
    <property type="evidence" value="ECO:0007669"/>
    <property type="project" value="UniProtKB-UniRule"/>
</dbReference>
<dbReference type="GO" id="GO:0009022">
    <property type="term" value="F:tRNA nucleotidyltransferase activity"/>
    <property type="evidence" value="ECO:0007669"/>
    <property type="project" value="UniProtKB-UniRule"/>
</dbReference>
<dbReference type="GO" id="GO:0016075">
    <property type="term" value="P:rRNA catabolic process"/>
    <property type="evidence" value="ECO:0007669"/>
    <property type="project" value="UniProtKB-UniRule"/>
</dbReference>
<dbReference type="GO" id="GO:0006364">
    <property type="term" value="P:rRNA processing"/>
    <property type="evidence" value="ECO:0007669"/>
    <property type="project" value="UniProtKB-KW"/>
</dbReference>
<dbReference type="GO" id="GO:0008033">
    <property type="term" value="P:tRNA processing"/>
    <property type="evidence" value="ECO:0007669"/>
    <property type="project" value="UniProtKB-UniRule"/>
</dbReference>
<dbReference type="CDD" id="cd11362">
    <property type="entry name" value="RNase_PH_bact"/>
    <property type="match status" value="1"/>
</dbReference>
<dbReference type="FunFam" id="3.30.230.70:FF:000003">
    <property type="entry name" value="Ribonuclease PH"/>
    <property type="match status" value="1"/>
</dbReference>
<dbReference type="Gene3D" id="3.30.230.70">
    <property type="entry name" value="GHMP Kinase, N-terminal domain"/>
    <property type="match status" value="1"/>
</dbReference>
<dbReference type="HAMAP" id="MF_00564">
    <property type="entry name" value="RNase_PH"/>
    <property type="match status" value="1"/>
</dbReference>
<dbReference type="InterPro" id="IPR001247">
    <property type="entry name" value="ExoRNase_PH_dom1"/>
</dbReference>
<dbReference type="InterPro" id="IPR015847">
    <property type="entry name" value="ExoRNase_PH_dom2"/>
</dbReference>
<dbReference type="InterPro" id="IPR036345">
    <property type="entry name" value="ExoRNase_PH_dom2_sf"/>
</dbReference>
<dbReference type="InterPro" id="IPR027408">
    <property type="entry name" value="PNPase/RNase_PH_dom_sf"/>
</dbReference>
<dbReference type="InterPro" id="IPR020568">
    <property type="entry name" value="Ribosomal_Su5_D2-typ_SF"/>
</dbReference>
<dbReference type="InterPro" id="IPR050080">
    <property type="entry name" value="RNase_PH"/>
</dbReference>
<dbReference type="InterPro" id="IPR002381">
    <property type="entry name" value="RNase_PH_bac-type"/>
</dbReference>
<dbReference type="InterPro" id="IPR018336">
    <property type="entry name" value="RNase_PH_CS"/>
</dbReference>
<dbReference type="NCBIfam" id="TIGR01966">
    <property type="entry name" value="RNasePH"/>
    <property type="match status" value="1"/>
</dbReference>
<dbReference type="PANTHER" id="PTHR11953">
    <property type="entry name" value="EXOSOME COMPLEX COMPONENT"/>
    <property type="match status" value="1"/>
</dbReference>
<dbReference type="PANTHER" id="PTHR11953:SF0">
    <property type="entry name" value="EXOSOME COMPLEX COMPONENT RRP41"/>
    <property type="match status" value="1"/>
</dbReference>
<dbReference type="Pfam" id="PF01138">
    <property type="entry name" value="RNase_PH"/>
    <property type="match status" value="1"/>
</dbReference>
<dbReference type="Pfam" id="PF03725">
    <property type="entry name" value="RNase_PH_C"/>
    <property type="match status" value="1"/>
</dbReference>
<dbReference type="SUPFAM" id="SSF55666">
    <property type="entry name" value="Ribonuclease PH domain 2-like"/>
    <property type="match status" value="1"/>
</dbReference>
<dbReference type="SUPFAM" id="SSF54211">
    <property type="entry name" value="Ribosomal protein S5 domain 2-like"/>
    <property type="match status" value="1"/>
</dbReference>
<dbReference type="PROSITE" id="PS01277">
    <property type="entry name" value="RIBONUCLEASE_PH"/>
    <property type="match status" value="1"/>
</dbReference>
<feature type="chain" id="PRO_1000146778" description="Ribonuclease PH">
    <location>
        <begin position="1"/>
        <end position="248"/>
    </location>
</feature>
<feature type="binding site" evidence="1">
    <location>
        <position position="86"/>
    </location>
    <ligand>
        <name>phosphate</name>
        <dbReference type="ChEBI" id="CHEBI:43474"/>
        <note>substrate</note>
    </ligand>
</feature>
<feature type="binding site" evidence="1">
    <location>
        <begin position="124"/>
        <end position="126"/>
    </location>
    <ligand>
        <name>phosphate</name>
        <dbReference type="ChEBI" id="CHEBI:43474"/>
        <note>substrate</note>
    </ligand>
</feature>
<proteinExistence type="inferred from homology"/>
<comment type="function">
    <text evidence="1">Phosphorolytic 3'-5' exoribonuclease that plays an important role in tRNA 3'-end maturation. Removes nucleotide residues following the 3'-CCA terminus of tRNAs; can also add nucleotides to the ends of RNA molecules by using nucleoside diphosphates as substrates, but this may not be physiologically important. Probably plays a role in initiation of 16S rRNA degradation (leading to ribosome degradation) during starvation.</text>
</comment>
<comment type="catalytic activity">
    <reaction evidence="1">
        <text>tRNA(n+1) + phosphate = tRNA(n) + a ribonucleoside 5'-diphosphate</text>
        <dbReference type="Rhea" id="RHEA:10628"/>
        <dbReference type="Rhea" id="RHEA-COMP:17343"/>
        <dbReference type="Rhea" id="RHEA-COMP:17344"/>
        <dbReference type="ChEBI" id="CHEBI:43474"/>
        <dbReference type="ChEBI" id="CHEBI:57930"/>
        <dbReference type="ChEBI" id="CHEBI:173114"/>
        <dbReference type="EC" id="2.7.7.56"/>
    </reaction>
</comment>
<comment type="subunit">
    <text evidence="1">Homohexameric ring arranged as a trimer of dimers.</text>
</comment>
<comment type="similarity">
    <text evidence="1">Belongs to the RNase PH family.</text>
</comment>
<evidence type="ECO:0000255" key="1">
    <source>
        <dbReference type="HAMAP-Rule" id="MF_00564"/>
    </source>
</evidence>
<protein>
    <recommendedName>
        <fullName evidence="1">Ribonuclease PH</fullName>
        <shortName evidence="1">RNase PH</shortName>
        <ecNumber evidence="1">2.7.7.56</ecNumber>
    </recommendedName>
    <alternativeName>
        <fullName evidence="1">tRNA nucleotidyltransferase</fullName>
    </alternativeName>
</protein>
<name>RNPH_LISMH</name>
<sequence>MRVDGRESNALRNIEVTPDYLMHPEGSVLIASGNTKVICSASVETKVPPFMRGEGRGWISAEYSMLPRATNTRNIRESSKGKVTGRTMEIQRLIGRALRAVVDLDALGERTIWLDCDVIQADGGTRTASITGAFIAMVMAIAKLDEAVPFAKFPVKDFLAATSVGVLEEGGTVLDLNYVEDSAAQVDMNIIMTGSGAFVELQGTGEEATFSETELAELIALGKKGISELIEIQKETLGDKVTARIKGE</sequence>
<keyword id="KW-0548">Nucleotidyltransferase</keyword>
<keyword id="KW-0694">RNA-binding</keyword>
<keyword id="KW-0698">rRNA processing</keyword>
<keyword id="KW-0808">Transferase</keyword>
<keyword id="KW-0819">tRNA processing</keyword>
<keyword id="KW-0820">tRNA-binding</keyword>
<organism>
    <name type="scientific">Listeria monocytogenes serotype 4a (strain HCC23)</name>
    <dbReference type="NCBI Taxonomy" id="552536"/>
    <lineage>
        <taxon>Bacteria</taxon>
        <taxon>Bacillati</taxon>
        <taxon>Bacillota</taxon>
        <taxon>Bacilli</taxon>
        <taxon>Bacillales</taxon>
        <taxon>Listeriaceae</taxon>
        <taxon>Listeria</taxon>
    </lineage>
</organism>